<protein>
    <recommendedName>
        <fullName>Cytochrome c peroxidase, mitochondrial</fullName>
        <shortName>CCP</shortName>
        <ecNumber evidence="2">1.11.1.5</ecNumber>
    </recommendedName>
</protein>
<feature type="transit peptide" description="Mitochondrion" evidence="3">
    <location>
        <begin position="1"/>
        <end position="40"/>
    </location>
</feature>
<feature type="chain" id="PRO_0000363407" description="Cytochrome c peroxidase, mitochondrial">
    <location>
        <begin position="41"/>
        <end position="362"/>
    </location>
</feature>
<feature type="active site" description="Proton acceptor" evidence="4 5">
    <location>
        <position position="121"/>
    </location>
</feature>
<feature type="active site" description="Tryptophan radical intermediate" evidence="1">
    <location>
        <position position="260"/>
    </location>
</feature>
<feature type="binding site" description="axial binding residue" evidence="4">
    <location>
        <position position="244"/>
    </location>
    <ligand>
        <name>heme b</name>
        <dbReference type="ChEBI" id="CHEBI:60344"/>
    </ligand>
    <ligandPart>
        <name>Fe</name>
        <dbReference type="ChEBI" id="CHEBI:18248"/>
    </ligandPart>
</feature>
<feature type="site" description="Transition state stabilizer" evidence="4">
    <location>
        <position position="117"/>
    </location>
</feature>
<accession>A4QVH4</accession>
<accession>G4MS72</accession>
<gene>
    <name type="primary">CCP1</name>
    <name type="ORF">MGG_04545</name>
</gene>
<reference key="1">
    <citation type="journal article" date="2005" name="Nature">
        <title>The genome sequence of the rice blast fungus Magnaporthe grisea.</title>
        <authorList>
            <person name="Dean R.A."/>
            <person name="Talbot N.J."/>
            <person name="Ebbole D.J."/>
            <person name="Farman M.L."/>
            <person name="Mitchell T.K."/>
            <person name="Orbach M.J."/>
            <person name="Thon M.R."/>
            <person name="Kulkarni R."/>
            <person name="Xu J.-R."/>
            <person name="Pan H."/>
            <person name="Read N.D."/>
            <person name="Lee Y.-H."/>
            <person name="Carbone I."/>
            <person name="Brown D."/>
            <person name="Oh Y.Y."/>
            <person name="Donofrio N."/>
            <person name="Jeong J.S."/>
            <person name="Soanes D.M."/>
            <person name="Djonovic S."/>
            <person name="Kolomiets E."/>
            <person name="Rehmeyer C."/>
            <person name="Li W."/>
            <person name="Harding M."/>
            <person name="Kim S."/>
            <person name="Lebrun M.-H."/>
            <person name="Bohnert H."/>
            <person name="Coughlan S."/>
            <person name="Butler J."/>
            <person name="Calvo S.E."/>
            <person name="Ma L.-J."/>
            <person name="Nicol R."/>
            <person name="Purcell S."/>
            <person name="Nusbaum C."/>
            <person name="Galagan J.E."/>
            <person name="Birren B.W."/>
        </authorList>
    </citation>
    <scope>NUCLEOTIDE SEQUENCE [LARGE SCALE GENOMIC DNA]</scope>
    <source>
        <strain>70-15 / ATCC MYA-4617 / FGSC 8958</strain>
    </source>
</reference>
<sequence length="362" mass="39861">MASASRQILRAASRASTRTAFAPAASRGLAARTIAGRRFYSSSSEPAKASSSNLGWIAGALAAAAAGAGYWYTQNGGAATLTKPEFKDYQTVYNDIASRLEENPDYDDGSYGPVLVRLAWHASGTYDKETGTGGSNGATMRFSPEGGHGANAGLKAARDFLEPIKAKYPWITYSDLWILGGVCAIQEMLGPKIPYRPGRSDKDAAACTPDGRLPDAAQRQDHVRNIFYRMGFNDQEIVALAGAHALGRCHTDRSGFDGPWTFSPTVLTNDYFKLLLNEKWEYKKWDGPKQYVDSKTKSLMMLPADMCLIEDKKFKEWTKKYADDNDLFFKDFSAAVLKLFELGVPFAEGTENQRWIFKPTSE</sequence>
<keyword id="KW-0349">Heme</keyword>
<keyword id="KW-0408">Iron</keyword>
<keyword id="KW-0479">Metal-binding</keyword>
<keyword id="KW-0496">Mitochondrion</keyword>
<keyword id="KW-0560">Oxidoreductase</keyword>
<keyword id="KW-0575">Peroxidase</keyword>
<keyword id="KW-1185">Reference proteome</keyword>
<keyword id="KW-0809">Transit peptide</keyword>
<organism>
    <name type="scientific">Pyricularia oryzae (strain 70-15 / ATCC MYA-4617 / FGSC 8958)</name>
    <name type="common">Rice blast fungus</name>
    <name type="synonym">Magnaporthe oryzae</name>
    <dbReference type="NCBI Taxonomy" id="242507"/>
    <lineage>
        <taxon>Eukaryota</taxon>
        <taxon>Fungi</taxon>
        <taxon>Dikarya</taxon>
        <taxon>Ascomycota</taxon>
        <taxon>Pezizomycotina</taxon>
        <taxon>Sordariomycetes</taxon>
        <taxon>Sordariomycetidae</taxon>
        <taxon>Magnaporthales</taxon>
        <taxon>Pyriculariaceae</taxon>
        <taxon>Pyricularia</taxon>
    </lineage>
</organism>
<evidence type="ECO:0000250" key="1"/>
<evidence type="ECO:0000250" key="2">
    <source>
        <dbReference type="UniProtKB" id="P00431"/>
    </source>
</evidence>
<evidence type="ECO:0000255" key="3"/>
<evidence type="ECO:0000255" key="4">
    <source>
        <dbReference type="PROSITE-ProRule" id="PRU00297"/>
    </source>
</evidence>
<evidence type="ECO:0000255" key="5">
    <source>
        <dbReference type="PROSITE-ProRule" id="PRU10012"/>
    </source>
</evidence>
<evidence type="ECO:0000305" key="6"/>
<dbReference type="EC" id="1.11.1.5" evidence="2"/>
<dbReference type="EMBL" id="CM001231">
    <property type="protein sequence ID" value="EHA58330.1"/>
    <property type="molecule type" value="Genomic_DNA"/>
</dbReference>
<dbReference type="RefSeq" id="XP_003710942.1">
    <property type="nucleotide sequence ID" value="XM_003710894.1"/>
</dbReference>
<dbReference type="SMR" id="A4QVH4"/>
<dbReference type="FunCoup" id="A4QVH4">
    <property type="interactions" value="75"/>
</dbReference>
<dbReference type="STRING" id="242507.A4QVH4"/>
<dbReference type="EnsemblFungi" id="MGG_04545T0">
    <property type="protein sequence ID" value="MGG_04545T0"/>
    <property type="gene ID" value="MGG_04545"/>
</dbReference>
<dbReference type="GeneID" id="2677767"/>
<dbReference type="KEGG" id="mgr:MGG_04545"/>
<dbReference type="VEuPathDB" id="FungiDB:MGG_04545"/>
<dbReference type="eggNOG" id="ENOG502QR1E">
    <property type="taxonomic scope" value="Eukaryota"/>
</dbReference>
<dbReference type="HOGENOM" id="CLU_036959_1_1_1"/>
<dbReference type="InParanoid" id="A4QVH4"/>
<dbReference type="OMA" id="QRKWNGP"/>
<dbReference type="OrthoDB" id="2859658at2759"/>
<dbReference type="PHI-base" id="PHI:5187"/>
<dbReference type="Proteomes" id="UP000009058">
    <property type="component" value="Chromosome 1"/>
</dbReference>
<dbReference type="GO" id="GO:0005758">
    <property type="term" value="C:mitochondrial intermembrane space"/>
    <property type="evidence" value="ECO:0007669"/>
    <property type="project" value="UniProtKB-SubCell"/>
</dbReference>
<dbReference type="GO" id="GO:0005759">
    <property type="term" value="C:mitochondrial matrix"/>
    <property type="evidence" value="ECO:0007669"/>
    <property type="project" value="UniProtKB-SubCell"/>
</dbReference>
<dbReference type="GO" id="GO:0004130">
    <property type="term" value="F:cytochrome-c peroxidase activity"/>
    <property type="evidence" value="ECO:0007669"/>
    <property type="project" value="UniProtKB-EC"/>
</dbReference>
<dbReference type="GO" id="GO:0020037">
    <property type="term" value="F:heme binding"/>
    <property type="evidence" value="ECO:0007669"/>
    <property type="project" value="InterPro"/>
</dbReference>
<dbReference type="GO" id="GO:0046872">
    <property type="term" value="F:metal ion binding"/>
    <property type="evidence" value="ECO:0007669"/>
    <property type="project" value="UniProtKB-KW"/>
</dbReference>
<dbReference type="GO" id="GO:0034599">
    <property type="term" value="P:cellular response to oxidative stress"/>
    <property type="evidence" value="ECO:0007669"/>
    <property type="project" value="InterPro"/>
</dbReference>
<dbReference type="GO" id="GO:0042744">
    <property type="term" value="P:hydrogen peroxide catabolic process"/>
    <property type="evidence" value="ECO:0007669"/>
    <property type="project" value="TreeGrafter"/>
</dbReference>
<dbReference type="GO" id="GO:0000302">
    <property type="term" value="P:response to reactive oxygen species"/>
    <property type="evidence" value="ECO:0007669"/>
    <property type="project" value="TreeGrafter"/>
</dbReference>
<dbReference type="CDD" id="cd00691">
    <property type="entry name" value="ascorbate_peroxidase"/>
    <property type="match status" value="1"/>
</dbReference>
<dbReference type="FunFam" id="1.10.420.10:FF:000009">
    <property type="entry name" value="Ascorbate peroxidase"/>
    <property type="match status" value="1"/>
</dbReference>
<dbReference type="FunFam" id="1.10.520.10:FF:000005">
    <property type="entry name" value="Cytochrome c peroxidase"/>
    <property type="match status" value="1"/>
</dbReference>
<dbReference type="Gene3D" id="1.10.520.10">
    <property type="match status" value="1"/>
</dbReference>
<dbReference type="Gene3D" id="1.10.420.10">
    <property type="entry name" value="Peroxidase, domain 2"/>
    <property type="match status" value="1"/>
</dbReference>
<dbReference type="InterPro" id="IPR044831">
    <property type="entry name" value="Ccp1-like"/>
</dbReference>
<dbReference type="InterPro" id="IPR002016">
    <property type="entry name" value="Haem_peroxidase"/>
</dbReference>
<dbReference type="InterPro" id="IPR010255">
    <property type="entry name" value="Haem_peroxidase_sf"/>
</dbReference>
<dbReference type="InterPro" id="IPR002207">
    <property type="entry name" value="Peroxidase_I"/>
</dbReference>
<dbReference type="InterPro" id="IPR019794">
    <property type="entry name" value="Peroxidases_AS"/>
</dbReference>
<dbReference type="InterPro" id="IPR019793">
    <property type="entry name" value="Peroxidases_heam-ligand_BS"/>
</dbReference>
<dbReference type="PANTHER" id="PTHR31356:SF58">
    <property type="entry name" value="CYTOCHROME C PEROXIDASE, MITOCHONDRIAL"/>
    <property type="match status" value="1"/>
</dbReference>
<dbReference type="PANTHER" id="PTHR31356">
    <property type="entry name" value="THYLAKOID LUMENAL 29 KDA PROTEIN, CHLOROPLASTIC-RELATED"/>
    <property type="match status" value="1"/>
</dbReference>
<dbReference type="Pfam" id="PF00141">
    <property type="entry name" value="peroxidase"/>
    <property type="match status" value="1"/>
</dbReference>
<dbReference type="PRINTS" id="PR00459">
    <property type="entry name" value="ASPEROXIDASE"/>
</dbReference>
<dbReference type="PRINTS" id="PR00458">
    <property type="entry name" value="PEROXIDASE"/>
</dbReference>
<dbReference type="SUPFAM" id="SSF48113">
    <property type="entry name" value="Heme-dependent peroxidases"/>
    <property type="match status" value="1"/>
</dbReference>
<dbReference type="PROSITE" id="PS00435">
    <property type="entry name" value="PEROXIDASE_1"/>
    <property type="match status" value="1"/>
</dbReference>
<dbReference type="PROSITE" id="PS00436">
    <property type="entry name" value="PEROXIDASE_2"/>
    <property type="match status" value="1"/>
</dbReference>
<dbReference type="PROSITE" id="PS50873">
    <property type="entry name" value="PEROXIDASE_4"/>
    <property type="match status" value="1"/>
</dbReference>
<proteinExistence type="inferred from homology"/>
<comment type="function">
    <text evidence="2">Destroys radicals which are normally produced within the cells and which are toxic to biological systems.</text>
</comment>
<comment type="catalytic activity">
    <reaction evidence="2">
        <text>2 Fe(II)-[cytochrome c] + H2O2 + 2 H(+) = 2 Fe(III)-[cytochrome c] + 2 H2O</text>
        <dbReference type="Rhea" id="RHEA:16581"/>
        <dbReference type="Rhea" id="RHEA-COMP:10350"/>
        <dbReference type="Rhea" id="RHEA-COMP:14399"/>
        <dbReference type="ChEBI" id="CHEBI:15377"/>
        <dbReference type="ChEBI" id="CHEBI:15378"/>
        <dbReference type="ChEBI" id="CHEBI:16240"/>
        <dbReference type="ChEBI" id="CHEBI:29033"/>
        <dbReference type="ChEBI" id="CHEBI:29034"/>
        <dbReference type="EC" id="1.11.1.5"/>
    </reaction>
</comment>
<comment type="cofactor">
    <cofactor evidence="4">
        <name>heme b</name>
        <dbReference type="ChEBI" id="CHEBI:60344"/>
    </cofactor>
    <text evidence="4">Binds 1 heme b (iron(II)-protoporphyrin IX) group per subunit.</text>
</comment>
<comment type="subunit">
    <text evidence="2">Forms a one-to-one complex with cytochrome c.</text>
</comment>
<comment type="subcellular location">
    <subcellularLocation>
        <location evidence="2">Mitochondrion matrix</location>
    </subcellularLocation>
    <subcellularLocation>
        <location evidence="2">Mitochondrion intermembrane space</location>
    </subcellularLocation>
</comment>
<comment type="similarity">
    <text evidence="6">Belongs to the peroxidase family. Cytochrome c peroxidase subfamily.</text>
</comment>
<name>CCPR_PYRO7</name>